<name>RS16_RICRS</name>
<comment type="similarity">
    <text evidence="1">Belongs to the bacterial ribosomal protein bS16 family.</text>
</comment>
<sequence length="111" mass="12476">MAVKIRLARGGAKKRPFYRVVVANATAPRDGDFLEKVGTYDPMLASDNSERVVLKKDRIEYWLGTGAKPTERVAKFIEQAGVTLPEKVKKEMEVKAKNRKARLSKKEAKEA</sequence>
<organism>
    <name type="scientific">Rickettsia rickettsii (strain Sheila Smith)</name>
    <dbReference type="NCBI Taxonomy" id="392021"/>
    <lineage>
        <taxon>Bacteria</taxon>
        <taxon>Pseudomonadati</taxon>
        <taxon>Pseudomonadota</taxon>
        <taxon>Alphaproteobacteria</taxon>
        <taxon>Rickettsiales</taxon>
        <taxon>Rickettsiaceae</taxon>
        <taxon>Rickettsieae</taxon>
        <taxon>Rickettsia</taxon>
        <taxon>spotted fever group</taxon>
    </lineage>
</organism>
<evidence type="ECO:0000255" key="1">
    <source>
        <dbReference type="HAMAP-Rule" id="MF_00385"/>
    </source>
</evidence>
<evidence type="ECO:0000305" key="2"/>
<keyword id="KW-0687">Ribonucleoprotein</keyword>
<keyword id="KW-0689">Ribosomal protein</keyword>
<dbReference type="EMBL" id="CP000848">
    <property type="protein sequence ID" value="ABV76931.1"/>
    <property type="molecule type" value="Genomic_DNA"/>
</dbReference>
<dbReference type="RefSeq" id="WP_004997078.1">
    <property type="nucleotide sequence ID" value="NC_009882.1"/>
</dbReference>
<dbReference type="SMR" id="A8GU56"/>
<dbReference type="GeneID" id="79937954"/>
<dbReference type="GeneID" id="95361740"/>
<dbReference type="KEGG" id="rri:A1G_07460"/>
<dbReference type="HOGENOM" id="CLU_100590_3_1_5"/>
<dbReference type="Proteomes" id="UP000006832">
    <property type="component" value="Chromosome"/>
</dbReference>
<dbReference type="GO" id="GO:0005737">
    <property type="term" value="C:cytoplasm"/>
    <property type="evidence" value="ECO:0007669"/>
    <property type="project" value="UniProtKB-ARBA"/>
</dbReference>
<dbReference type="GO" id="GO:0015935">
    <property type="term" value="C:small ribosomal subunit"/>
    <property type="evidence" value="ECO:0007669"/>
    <property type="project" value="TreeGrafter"/>
</dbReference>
<dbReference type="GO" id="GO:0003735">
    <property type="term" value="F:structural constituent of ribosome"/>
    <property type="evidence" value="ECO:0007669"/>
    <property type="project" value="InterPro"/>
</dbReference>
<dbReference type="GO" id="GO:0006412">
    <property type="term" value="P:translation"/>
    <property type="evidence" value="ECO:0007669"/>
    <property type="project" value="UniProtKB-UniRule"/>
</dbReference>
<dbReference type="Gene3D" id="3.30.1320.10">
    <property type="match status" value="1"/>
</dbReference>
<dbReference type="HAMAP" id="MF_00385">
    <property type="entry name" value="Ribosomal_bS16"/>
    <property type="match status" value="1"/>
</dbReference>
<dbReference type="InterPro" id="IPR000307">
    <property type="entry name" value="Ribosomal_bS16"/>
</dbReference>
<dbReference type="InterPro" id="IPR020592">
    <property type="entry name" value="Ribosomal_bS16_CS"/>
</dbReference>
<dbReference type="InterPro" id="IPR023803">
    <property type="entry name" value="Ribosomal_bS16_dom_sf"/>
</dbReference>
<dbReference type="NCBIfam" id="TIGR00002">
    <property type="entry name" value="S16"/>
    <property type="match status" value="1"/>
</dbReference>
<dbReference type="PANTHER" id="PTHR12919">
    <property type="entry name" value="30S RIBOSOMAL PROTEIN S16"/>
    <property type="match status" value="1"/>
</dbReference>
<dbReference type="PANTHER" id="PTHR12919:SF20">
    <property type="entry name" value="SMALL RIBOSOMAL SUBUNIT PROTEIN BS16M"/>
    <property type="match status" value="1"/>
</dbReference>
<dbReference type="Pfam" id="PF00886">
    <property type="entry name" value="Ribosomal_S16"/>
    <property type="match status" value="1"/>
</dbReference>
<dbReference type="SUPFAM" id="SSF54565">
    <property type="entry name" value="Ribosomal protein S16"/>
    <property type="match status" value="1"/>
</dbReference>
<dbReference type="PROSITE" id="PS00732">
    <property type="entry name" value="RIBOSOMAL_S16"/>
    <property type="match status" value="1"/>
</dbReference>
<reference key="1">
    <citation type="submission" date="2007-09" db="EMBL/GenBank/DDBJ databases">
        <title>Complete genome sequence of Rickettsia rickettsii.</title>
        <authorList>
            <person name="Madan A."/>
            <person name="Fahey J."/>
            <person name="Helton E."/>
            <person name="Ketteman M."/>
            <person name="Madan A."/>
            <person name="Rodrigues S."/>
            <person name="Sanchez A."/>
            <person name="Dasch G."/>
            <person name="Eremeeva M."/>
        </authorList>
    </citation>
    <scope>NUCLEOTIDE SEQUENCE [LARGE SCALE GENOMIC DNA]</scope>
    <source>
        <strain>Sheila Smith</strain>
    </source>
</reference>
<protein>
    <recommendedName>
        <fullName evidence="1">Small ribosomal subunit protein bS16</fullName>
    </recommendedName>
    <alternativeName>
        <fullName evidence="2">30S ribosomal protein S16</fullName>
    </alternativeName>
</protein>
<feature type="chain" id="PRO_1000049336" description="Small ribosomal subunit protein bS16">
    <location>
        <begin position="1"/>
        <end position="111"/>
    </location>
</feature>
<proteinExistence type="inferred from homology"/>
<accession>A8GU56</accession>
<gene>
    <name evidence="1" type="primary">rpsP</name>
    <name type="ordered locus">A1G_07460</name>
</gene>